<evidence type="ECO:0000255" key="1">
    <source>
        <dbReference type="HAMAP-Rule" id="MF_00409"/>
    </source>
</evidence>
<accession>B2SKI3</accession>
<comment type="function">
    <text evidence="1">Transfers the gamma-phosphate of ATP to the 4'-position of a tetraacyldisaccharide 1-phosphate intermediate (termed DS-1-P) to form tetraacyldisaccharide 1,4'-bis-phosphate (lipid IVA).</text>
</comment>
<comment type="catalytic activity">
    <reaction evidence="1">
        <text>a lipid A disaccharide + ATP = a lipid IVA + ADP + H(+)</text>
        <dbReference type="Rhea" id="RHEA:67840"/>
        <dbReference type="ChEBI" id="CHEBI:15378"/>
        <dbReference type="ChEBI" id="CHEBI:30616"/>
        <dbReference type="ChEBI" id="CHEBI:176343"/>
        <dbReference type="ChEBI" id="CHEBI:176425"/>
        <dbReference type="ChEBI" id="CHEBI:456216"/>
        <dbReference type="EC" id="2.7.1.130"/>
    </reaction>
</comment>
<comment type="pathway">
    <text evidence="1">Glycolipid biosynthesis; lipid IV(A) biosynthesis; lipid IV(A) from (3R)-3-hydroxytetradecanoyl-[acyl-carrier-protein] and UDP-N-acetyl-alpha-D-glucosamine: step 6/6.</text>
</comment>
<comment type="similarity">
    <text evidence="1">Belongs to the LpxK family.</text>
</comment>
<feature type="chain" id="PRO_1000123752" description="Tetraacyldisaccharide 4'-kinase">
    <location>
        <begin position="1"/>
        <end position="346"/>
    </location>
</feature>
<feature type="binding site" evidence="1">
    <location>
        <begin position="62"/>
        <end position="69"/>
    </location>
    <ligand>
        <name>ATP</name>
        <dbReference type="ChEBI" id="CHEBI:30616"/>
    </ligand>
</feature>
<name>LPXK_XANOP</name>
<dbReference type="EC" id="2.7.1.130" evidence="1"/>
<dbReference type="EMBL" id="CP000967">
    <property type="protein sequence ID" value="ACD58905.1"/>
    <property type="molecule type" value="Genomic_DNA"/>
</dbReference>
<dbReference type="RefSeq" id="WP_011258973.1">
    <property type="nucleotide sequence ID" value="NC_010717.2"/>
</dbReference>
<dbReference type="SMR" id="B2SKI3"/>
<dbReference type="KEGG" id="xop:PXO_00587"/>
<dbReference type="eggNOG" id="COG1663">
    <property type="taxonomic scope" value="Bacteria"/>
</dbReference>
<dbReference type="HOGENOM" id="CLU_038816_2_0_6"/>
<dbReference type="UniPathway" id="UPA00359">
    <property type="reaction ID" value="UER00482"/>
</dbReference>
<dbReference type="Proteomes" id="UP000001740">
    <property type="component" value="Chromosome"/>
</dbReference>
<dbReference type="GO" id="GO:0005886">
    <property type="term" value="C:plasma membrane"/>
    <property type="evidence" value="ECO:0007669"/>
    <property type="project" value="TreeGrafter"/>
</dbReference>
<dbReference type="GO" id="GO:0005524">
    <property type="term" value="F:ATP binding"/>
    <property type="evidence" value="ECO:0007669"/>
    <property type="project" value="UniProtKB-UniRule"/>
</dbReference>
<dbReference type="GO" id="GO:0009029">
    <property type="term" value="F:tetraacyldisaccharide 4'-kinase activity"/>
    <property type="evidence" value="ECO:0007669"/>
    <property type="project" value="UniProtKB-UniRule"/>
</dbReference>
<dbReference type="GO" id="GO:0009245">
    <property type="term" value="P:lipid A biosynthetic process"/>
    <property type="evidence" value="ECO:0007669"/>
    <property type="project" value="UniProtKB-UniRule"/>
</dbReference>
<dbReference type="GO" id="GO:0009244">
    <property type="term" value="P:lipopolysaccharide core region biosynthetic process"/>
    <property type="evidence" value="ECO:0007669"/>
    <property type="project" value="TreeGrafter"/>
</dbReference>
<dbReference type="HAMAP" id="MF_00409">
    <property type="entry name" value="LpxK"/>
    <property type="match status" value="1"/>
</dbReference>
<dbReference type="InterPro" id="IPR003758">
    <property type="entry name" value="LpxK"/>
</dbReference>
<dbReference type="InterPro" id="IPR027417">
    <property type="entry name" value="P-loop_NTPase"/>
</dbReference>
<dbReference type="NCBIfam" id="TIGR00682">
    <property type="entry name" value="lpxK"/>
    <property type="match status" value="1"/>
</dbReference>
<dbReference type="PANTHER" id="PTHR42724">
    <property type="entry name" value="TETRAACYLDISACCHARIDE 4'-KINASE"/>
    <property type="match status" value="1"/>
</dbReference>
<dbReference type="PANTHER" id="PTHR42724:SF1">
    <property type="entry name" value="TETRAACYLDISACCHARIDE 4'-KINASE, MITOCHONDRIAL-RELATED"/>
    <property type="match status" value="1"/>
</dbReference>
<dbReference type="Pfam" id="PF02606">
    <property type="entry name" value="LpxK"/>
    <property type="match status" value="1"/>
</dbReference>
<dbReference type="SUPFAM" id="SSF52540">
    <property type="entry name" value="P-loop containing nucleoside triphosphate hydrolases"/>
    <property type="match status" value="1"/>
</dbReference>
<proteinExistence type="inferred from homology"/>
<protein>
    <recommendedName>
        <fullName evidence="1">Tetraacyldisaccharide 4'-kinase</fullName>
        <ecNumber evidence="1">2.7.1.130</ecNumber>
    </recommendedName>
    <alternativeName>
        <fullName evidence="1">Lipid A 4'-kinase</fullName>
    </alternativeName>
</protein>
<organism>
    <name type="scientific">Xanthomonas oryzae pv. oryzae (strain PXO99A)</name>
    <dbReference type="NCBI Taxonomy" id="360094"/>
    <lineage>
        <taxon>Bacteria</taxon>
        <taxon>Pseudomonadati</taxon>
        <taxon>Pseudomonadota</taxon>
        <taxon>Gammaproteobacteria</taxon>
        <taxon>Lysobacterales</taxon>
        <taxon>Lysobacteraceae</taxon>
        <taxon>Xanthomonas</taxon>
    </lineage>
</organism>
<gene>
    <name evidence="1" type="primary">lpxK</name>
    <name type="ordered locus">PXO_00587</name>
</gene>
<keyword id="KW-0067">ATP-binding</keyword>
<keyword id="KW-0418">Kinase</keyword>
<keyword id="KW-0441">Lipid A biosynthesis</keyword>
<keyword id="KW-0444">Lipid biosynthesis</keyword>
<keyword id="KW-0443">Lipid metabolism</keyword>
<keyword id="KW-0547">Nucleotide-binding</keyword>
<keyword id="KW-0808">Transferase</keyword>
<reference key="1">
    <citation type="journal article" date="2008" name="BMC Genomics">
        <title>Genome sequence and rapid evolution of the rice pathogen Xanthomonas oryzae pv. oryzae PXO99A.</title>
        <authorList>
            <person name="Salzberg S.L."/>
            <person name="Sommer D.D."/>
            <person name="Schatz M.C."/>
            <person name="Phillippy A.M."/>
            <person name="Rabinowicz P.D."/>
            <person name="Tsuge S."/>
            <person name="Furutani A."/>
            <person name="Ochiai H."/>
            <person name="Delcher A.L."/>
            <person name="Kelley D."/>
            <person name="Madupu R."/>
            <person name="Puiu D."/>
            <person name="Radune D."/>
            <person name="Shumway M."/>
            <person name="Trapnell C."/>
            <person name="Aparna G."/>
            <person name="Jha G."/>
            <person name="Pandey A."/>
            <person name="Patil P.B."/>
            <person name="Ishihara H."/>
            <person name="Meyer D.F."/>
            <person name="Szurek B."/>
            <person name="Verdier V."/>
            <person name="Koebnik R."/>
            <person name="Dow J.M."/>
            <person name="Ryan R.P."/>
            <person name="Hirata H."/>
            <person name="Tsuyumu S."/>
            <person name="Won Lee S."/>
            <person name="Seo Y.-S."/>
            <person name="Sriariyanum M."/>
            <person name="Ronald P.C."/>
            <person name="Sonti R.V."/>
            <person name="Van Sluys M.-A."/>
            <person name="Leach J.E."/>
            <person name="White F.F."/>
            <person name="Bogdanove A.J."/>
        </authorList>
    </citation>
    <scope>NUCLEOTIDE SEQUENCE [LARGE SCALE GENOMIC DNA]</scope>
    <source>
        <strain>PXO99A</strain>
    </source>
</reference>
<sequence length="346" mass="37712">MSKRGARTPGFWYDNNTPIPLPARILVPVYGAAIALRRALYRRGWRKRHGVPVPVIVVGNVTAGGTGKTPLTIALVAKLQEAGWTPGVASRGYGRDEAGKARWVEADTPVALGGDEPVLIAWKTGARVRVDSDRLAAARALVEAGCDIVICDDGLQHYRLARDVEIEVVDGQRRYGNGRLLPAGPLREPVARARDCDFRVVNLGQASTTAAPQAPDDAGFGEWQMRLSIDSVQPMDGKRAQPLSMLAGQRVHAVAGIAYPERFFAMLRARGIGVVPHAFPDHHVYRAADFSFGSRLPVLMTEKDAVKCRPFADEWLYSVPLKAELPAAFWVSLLDRLNKLASRQGV</sequence>